<gene>
    <name evidence="1" type="primary">htpX</name>
    <name type="ordered locus">SPN23F11780</name>
</gene>
<accession>B8ZJU7</accession>
<proteinExistence type="inferred from homology"/>
<protein>
    <recommendedName>
        <fullName evidence="1">Protease HtpX homolog</fullName>
        <ecNumber evidence="1">3.4.24.-</ecNumber>
    </recommendedName>
</protein>
<keyword id="KW-1003">Cell membrane</keyword>
<keyword id="KW-0378">Hydrolase</keyword>
<keyword id="KW-0472">Membrane</keyword>
<keyword id="KW-0479">Metal-binding</keyword>
<keyword id="KW-0482">Metalloprotease</keyword>
<keyword id="KW-0645">Protease</keyword>
<keyword id="KW-0812">Transmembrane</keyword>
<keyword id="KW-1133">Transmembrane helix</keyword>
<keyword id="KW-0862">Zinc</keyword>
<comment type="cofactor">
    <cofactor evidence="1">
        <name>Zn(2+)</name>
        <dbReference type="ChEBI" id="CHEBI:29105"/>
    </cofactor>
    <text evidence="1">Binds 1 zinc ion per subunit.</text>
</comment>
<comment type="subcellular location">
    <subcellularLocation>
        <location evidence="1">Cell membrane</location>
        <topology evidence="1">Multi-pass membrane protein</topology>
    </subcellularLocation>
</comment>
<comment type="similarity">
    <text evidence="1">Belongs to the peptidase M48B family.</text>
</comment>
<dbReference type="EC" id="3.4.24.-" evidence="1"/>
<dbReference type="EMBL" id="FM211187">
    <property type="protein sequence ID" value="CAR68984.1"/>
    <property type="molecule type" value="Genomic_DNA"/>
</dbReference>
<dbReference type="RefSeq" id="WP_000895733.1">
    <property type="nucleotide sequence ID" value="NC_011900.1"/>
</dbReference>
<dbReference type="KEGG" id="sne:SPN23F11780"/>
<dbReference type="HOGENOM" id="CLU_042266_2_1_9"/>
<dbReference type="GO" id="GO:0005886">
    <property type="term" value="C:plasma membrane"/>
    <property type="evidence" value="ECO:0007669"/>
    <property type="project" value="UniProtKB-SubCell"/>
</dbReference>
<dbReference type="GO" id="GO:0004222">
    <property type="term" value="F:metalloendopeptidase activity"/>
    <property type="evidence" value="ECO:0007669"/>
    <property type="project" value="UniProtKB-UniRule"/>
</dbReference>
<dbReference type="GO" id="GO:0008270">
    <property type="term" value="F:zinc ion binding"/>
    <property type="evidence" value="ECO:0007669"/>
    <property type="project" value="UniProtKB-UniRule"/>
</dbReference>
<dbReference type="GO" id="GO:0006508">
    <property type="term" value="P:proteolysis"/>
    <property type="evidence" value="ECO:0007669"/>
    <property type="project" value="UniProtKB-KW"/>
</dbReference>
<dbReference type="CDD" id="cd07340">
    <property type="entry name" value="M48B_Htpx_like"/>
    <property type="match status" value="1"/>
</dbReference>
<dbReference type="Gene3D" id="3.30.2010.10">
    <property type="entry name" value="Metalloproteases ('zincins'), catalytic domain"/>
    <property type="match status" value="1"/>
</dbReference>
<dbReference type="HAMAP" id="MF_00188">
    <property type="entry name" value="Pept_M48_protease_HtpX"/>
    <property type="match status" value="1"/>
</dbReference>
<dbReference type="InterPro" id="IPR050083">
    <property type="entry name" value="HtpX_protease"/>
</dbReference>
<dbReference type="InterPro" id="IPR022919">
    <property type="entry name" value="Pept_M48_protease_HtpX"/>
</dbReference>
<dbReference type="InterPro" id="IPR001915">
    <property type="entry name" value="Peptidase_M48"/>
</dbReference>
<dbReference type="NCBIfam" id="NF003425">
    <property type="entry name" value="PRK04897.1"/>
    <property type="match status" value="1"/>
</dbReference>
<dbReference type="PANTHER" id="PTHR43221">
    <property type="entry name" value="PROTEASE HTPX"/>
    <property type="match status" value="1"/>
</dbReference>
<dbReference type="PANTHER" id="PTHR43221:SF1">
    <property type="entry name" value="PROTEASE HTPX"/>
    <property type="match status" value="1"/>
</dbReference>
<dbReference type="Pfam" id="PF01435">
    <property type="entry name" value="Peptidase_M48"/>
    <property type="match status" value="1"/>
</dbReference>
<evidence type="ECO:0000255" key="1">
    <source>
        <dbReference type="HAMAP-Rule" id="MF_00188"/>
    </source>
</evidence>
<feature type="chain" id="PRO_1000192747" description="Protease HtpX homolog">
    <location>
        <begin position="1"/>
        <end position="299"/>
    </location>
</feature>
<feature type="transmembrane region" description="Helical" evidence="1">
    <location>
        <begin position="15"/>
        <end position="35"/>
    </location>
</feature>
<feature type="transmembrane region" description="Helical" evidence="1">
    <location>
        <begin position="39"/>
        <end position="59"/>
    </location>
</feature>
<feature type="transmembrane region" description="Helical" evidence="1">
    <location>
        <begin position="158"/>
        <end position="178"/>
    </location>
</feature>
<feature type="transmembrane region" description="Helical" evidence="1">
    <location>
        <begin position="198"/>
        <end position="218"/>
    </location>
</feature>
<feature type="active site" evidence="1">
    <location>
        <position position="144"/>
    </location>
</feature>
<feature type="binding site" evidence="1">
    <location>
        <position position="143"/>
    </location>
    <ligand>
        <name>Zn(2+)</name>
        <dbReference type="ChEBI" id="CHEBI:29105"/>
        <note>catalytic</note>
    </ligand>
</feature>
<feature type="binding site" evidence="1">
    <location>
        <position position="147"/>
    </location>
    <ligand>
        <name>Zn(2+)</name>
        <dbReference type="ChEBI" id="CHEBI:29105"/>
        <note>catalytic</note>
    </ligand>
</feature>
<feature type="binding site" evidence="1">
    <location>
        <position position="227"/>
    </location>
    <ligand>
        <name>Zn(2+)</name>
        <dbReference type="ChEBI" id="CHEBI:29105"/>
        <note>catalytic</note>
    </ligand>
</feature>
<reference key="1">
    <citation type="journal article" date="2009" name="J. Bacteriol.">
        <title>Role of conjugative elements in the evolution of the multidrug-resistant pandemic clone Streptococcus pneumoniae Spain23F ST81.</title>
        <authorList>
            <person name="Croucher N.J."/>
            <person name="Walker D."/>
            <person name="Romero P."/>
            <person name="Lennard N."/>
            <person name="Paterson G.K."/>
            <person name="Bason N.C."/>
            <person name="Mitchell A.M."/>
            <person name="Quail M.A."/>
            <person name="Andrew P.W."/>
            <person name="Parkhill J."/>
            <person name="Bentley S.D."/>
            <person name="Mitchell T.J."/>
        </authorList>
    </citation>
    <scope>NUCLEOTIDE SEQUENCE [LARGE SCALE GENOMIC DNA]</scope>
    <source>
        <strain>ATCC 700669 / Spain 23F-1</strain>
    </source>
</reference>
<organism>
    <name type="scientific">Streptococcus pneumoniae (strain ATCC 700669 / Spain 23F-1)</name>
    <dbReference type="NCBI Taxonomy" id="561276"/>
    <lineage>
        <taxon>Bacteria</taxon>
        <taxon>Bacillati</taxon>
        <taxon>Bacillota</taxon>
        <taxon>Bacilli</taxon>
        <taxon>Lactobacillales</taxon>
        <taxon>Streptococcaceae</taxon>
        <taxon>Streptococcus</taxon>
    </lineage>
</organism>
<sequence>MLFDQIASNKRKTWILLLVFFLLLALVGYAVGYLFIRSGLGGLVIALIIGFIYALSMIFQSTEIVMSMNGAREVDEQTAPDLYHVVEDMALVAQIPMPRVFIIDDPALNAFATGSNPQNAAVAATSGLLAIMNREELEAVMGHEVSHIRNYDIRISTIAVALASAITMLSSMAGRMMWWGGAGRRRSDDDRDGNGLEIIMLVVSLLAIVLAPLAATLVQLAISRQREFLADASSVELTRNPQGMINALDKLDNSKPMSRHVDDASSALYINDPKKGGGFQKLFYTHPPISERIERLKHM</sequence>
<name>HTPX_STRPJ</name>